<proteinExistence type="inferred from homology"/>
<sequence length="286" mass="32104">MIILDGKKVASRRKEELTAKISKYHNKGLRKPKLVVIMVGNDPASEVYVSHKIKVANEVGIYSELLRFDKDIKKEELYNKINELNNDQNIDGILLQLPLPIDFIEEDYLQAITPSKDVDGFHYINQGKMLQGYDTVYPCTPLGIINLLEEYNISVKNKDITLIGTSNIVGKPLGMMLLNNQATITMCNKNTKNIKNHTINADIIISATGKQFIITEDMIKKDAVIIDVGIIRDPVTNKLVGDVDFEKVKLKSSYITPVPGGVGPMTVITLMENTFVLYEKHINKSK</sequence>
<gene>
    <name evidence="1" type="primary">folD</name>
    <name type="ordered locus">Mfl167</name>
</gene>
<name>FOLD_MESFL</name>
<keyword id="KW-0028">Amino-acid biosynthesis</keyword>
<keyword id="KW-0368">Histidine biosynthesis</keyword>
<keyword id="KW-0378">Hydrolase</keyword>
<keyword id="KW-0486">Methionine biosynthesis</keyword>
<keyword id="KW-0511">Multifunctional enzyme</keyword>
<keyword id="KW-0521">NADP</keyword>
<keyword id="KW-0554">One-carbon metabolism</keyword>
<keyword id="KW-0560">Oxidoreductase</keyword>
<keyword id="KW-0658">Purine biosynthesis</keyword>
<keyword id="KW-1185">Reference proteome</keyword>
<comment type="function">
    <text evidence="1">Catalyzes the oxidation of 5,10-methylenetetrahydrofolate to 5,10-methenyltetrahydrofolate and then the hydrolysis of 5,10-methenyltetrahydrofolate to 10-formyltetrahydrofolate.</text>
</comment>
<comment type="catalytic activity">
    <reaction evidence="1">
        <text>(6R)-5,10-methylene-5,6,7,8-tetrahydrofolate + NADP(+) = (6R)-5,10-methenyltetrahydrofolate + NADPH</text>
        <dbReference type="Rhea" id="RHEA:22812"/>
        <dbReference type="ChEBI" id="CHEBI:15636"/>
        <dbReference type="ChEBI" id="CHEBI:57455"/>
        <dbReference type="ChEBI" id="CHEBI:57783"/>
        <dbReference type="ChEBI" id="CHEBI:58349"/>
        <dbReference type="EC" id="1.5.1.5"/>
    </reaction>
</comment>
<comment type="catalytic activity">
    <reaction evidence="1">
        <text>(6R)-5,10-methenyltetrahydrofolate + H2O = (6R)-10-formyltetrahydrofolate + H(+)</text>
        <dbReference type="Rhea" id="RHEA:23700"/>
        <dbReference type="ChEBI" id="CHEBI:15377"/>
        <dbReference type="ChEBI" id="CHEBI:15378"/>
        <dbReference type="ChEBI" id="CHEBI:57455"/>
        <dbReference type="ChEBI" id="CHEBI:195366"/>
        <dbReference type="EC" id="3.5.4.9"/>
    </reaction>
</comment>
<comment type="pathway">
    <text evidence="1">One-carbon metabolism; tetrahydrofolate interconversion.</text>
</comment>
<comment type="subunit">
    <text evidence="1">Homodimer.</text>
</comment>
<comment type="similarity">
    <text evidence="1">Belongs to the tetrahydrofolate dehydrogenase/cyclohydrolase family.</text>
</comment>
<dbReference type="EC" id="1.5.1.5" evidence="1"/>
<dbReference type="EC" id="3.5.4.9" evidence="1"/>
<dbReference type="EMBL" id="AE017263">
    <property type="protein sequence ID" value="AAT75523.1"/>
    <property type="molecule type" value="Genomic_DNA"/>
</dbReference>
<dbReference type="RefSeq" id="WP_011183064.1">
    <property type="nucleotide sequence ID" value="NC_006055.1"/>
</dbReference>
<dbReference type="RefSeq" id="YP_053407.1">
    <property type="nucleotide sequence ID" value="NC_006055.1"/>
</dbReference>
<dbReference type="SMR" id="Q6F1V0"/>
<dbReference type="STRING" id="265311.Mfl167"/>
<dbReference type="PaxDb" id="265311-Mfl167"/>
<dbReference type="EnsemblBacteria" id="AAT75523">
    <property type="protein sequence ID" value="AAT75523"/>
    <property type="gene ID" value="Mfl167"/>
</dbReference>
<dbReference type="GeneID" id="2898248"/>
<dbReference type="KEGG" id="mfl:Mfl167"/>
<dbReference type="PATRIC" id="fig|265311.5.peg.168"/>
<dbReference type="eggNOG" id="COG0190">
    <property type="taxonomic scope" value="Bacteria"/>
</dbReference>
<dbReference type="HOGENOM" id="CLU_034045_2_1_14"/>
<dbReference type="OrthoDB" id="9803580at2"/>
<dbReference type="UniPathway" id="UPA00193"/>
<dbReference type="Proteomes" id="UP000006647">
    <property type="component" value="Chromosome"/>
</dbReference>
<dbReference type="GO" id="GO:0005829">
    <property type="term" value="C:cytosol"/>
    <property type="evidence" value="ECO:0007669"/>
    <property type="project" value="TreeGrafter"/>
</dbReference>
<dbReference type="GO" id="GO:0004477">
    <property type="term" value="F:methenyltetrahydrofolate cyclohydrolase activity"/>
    <property type="evidence" value="ECO:0007669"/>
    <property type="project" value="UniProtKB-UniRule"/>
</dbReference>
<dbReference type="GO" id="GO:0004488">
    <property type="term" value="F:methylenetetrahydrofolate dehydrogenase (NADP+) activity"/>
    <property type="evidence" value="ECO:0007669"/>
    <property type="project" value="UniProtKB-UniRule"/>
</dbReference>
<dbReference type="GO" id="GO:0000105">
    <property type="term" value="P:L-histidine biosynthetic process"/>
    <property type="evidence" value="ECO:0007669"/>
    <property type="project" value="UniProtKB-KW"/>
</dbReference>
<dbReference type="GO" id="GO:0009086">
    <property type="term" value="P:methionine biosynthetic process"/>
    <property type="evidence" value="ECO:0007669"/>
    <property type="project" value="UniProtKB-KW"/>
</dbReference>
<dbReference type="GO" id="GO:0006164">
    <property type="term" value="P:purine nucleotide biosynthetic process"/>
    <property type="evidence" value="ECO:0007669"/>
    <property type="project" value="UniProtKB-KW"/>
</dbReference>
<dbReference type="GO" id="GO:0035999">
    <property type="term" value="P:tetrahydrofolate interconversion"/>
    <property type="evidence" value="ECO:0007669"/>
    <property type="project" value="UniProtKB-UniRule"/>
</dbReference>
<dbReference type="CDD" id="cd01080">
    <property type="entry name" value="NAD_bind_m-THF_DH_Cyclohyd"/>
    <property type="match status" value="1"/>
</dbReference>
<dbReference type="FunFam" id="3.40.50.720:FF:000006">
    <property type="entry name" value="Bifunctional protein FolD"/>
    <property type="match status" value="1"/>
</dbReference>
<dbReference type="FunFam" id="3.40.50.10860:FF:000005">
    <property type="entry name" value="C-1-tetrahydrofolate synthase, cytoplasmic, putative"/>
    <property type="match status" value="1"/>
</dbReference>
<dbReference type="Gene3D" id="3.40.50.10860">
    <property type="entry name" value="Leucine Dehydrogenase, chain A, domain 1"/>
    <property type="match status" value="1"/>
</dbReference>
<dbReference type="Gene3D" id="3.40.50.720">
    <property type="entry name" value="NAD(P)-binding Rossmann-like Domain"/>
    <property type="match status" value="1"/>
</dbReference>
<dbReference type="HAMAP" id="MF_01576">
    <property type="entry name" value="THF_DHG_CYH"/>
    <property type="match status" value="1"/>
</dbReference>
<dbReference type="InterPro" id="IPR046346">
    <property type="entry name" value="Aminoacid_DH-like_N_sf"/>
</dbReference>
<dbReference type="InterPro" id="IPR036291">
    <property type="entry name" value="NAD(P)-bd_dom_sf"/>
</dbReference>
<dbReference type="InterPro" id="IPR000672">
    <property type="entry name" value="THF_DH/CycHdrlase"/>
</dbReference>
<dbReference type="InterPro" id="IPR020630">
    <property type="entry name" value="THF_DH/CycHdrlase_cat_dom"/>
</dbReference>
<dbReference type="InterPro" id="IPR020867">
    <property type="entry name" value="THF_DH/CycHdrlase_CS"/>
</dbReference>
<dbReference type="InterPro" id="IPR020631">
    <property type="entry name" value="THF_DH/CycHdrlase_NAD-bd_dom"/>
</dbReference>
<dbReference type="PANTHER" id="PTHR48099:SF5">
    <property type="entry name" value="C-1-TETRAHYDROFOLATE SYNTHASE, CYTOPLASMIC"/>
    <property type="match status" value="1"/>
</dbReference>
<dbReference type="PANTHER" id="PTHR48099">
    <property type="entry name" value="C-1-TETRAHYDROFOLATE SYNTHASE, CYTOPLASMIC-RELATED"/>
    <property type="match status" value="1"/>
</dbReference>
<dbReference type="Pfam" id="PF00763">
    <property type="entry name" value="THF_DHG_CYH"/>
    <property type="match status" value="1"/>
</dbReference>
<dbReference type="Pfam" id="PF02882">
    <property type="entry name" value="THF_DHG_CYH_C"/>
    <property type="match status" value="1"/>
</dbReference>
<dbReference type="PRINTS" id="PR00085">
    <property type="entry name" value="THFDHDRGNASE"/>
</dbReference>
<dbReference type="SUPFAM" id="SSF53223">
    <property type="entry name" value="Aminoacid dehydrogenase-like, N-terminal domain"/>
    <property type="match status" value="1"/>
</dbReference>
<dbReference type="SUPFAM" id="SSF51735">
    <property type="entry name" value="NAD(P)-binding Rossmann-fold domains"/>
    <property type="match status" value="1"/>
</dbReference>
<dbReference type="PROSITE" id="PS00767">
    <property type="entry name" value="THF_DHG_CYH_2"/>
    <property type="match status" value="1"/>
</dbReference>
<feature type="chain" id="PRO_0000268394" description="Bifunctional protein FolD">
    <location>
        <begin position="1"/>
        <end position="286"/>
    </location>
</feature>
<feature type="binding site" evidence="1">
    <location>
        <begin position="164"/>
        <end position="166"/>
    </location>
    <ligand>
        <name>NADP(+)</name>
        <dbReference type="ChEBI" id="CHEBI:58349"/>
    </ligand>
</feature>
<feature type="binding site" evidence="1">
    <location>
        <position position="230"/>
    </location>
    <ligand>
        <name>NADP(+)</name>
        <dbReference type="ChEBI" id="CHEBI:58349"/>
    </ligand>
</feature>
<evidence type="ECO:0000255" key="1">
    <source>
        <dbReference type="HAMAP-Rule" id="MF_01576"/>
    </source>
</evidence>
<protein>
    <recommendedName>
        <fullName evidence="1">Bifunctional protein FolD</fullName>
    </recommendedName>
    <domain>
        <recommendedName>
            <fullName evidence="1">Methylenetetrahydrofolate dehydrogenase</fullName>
            <ecNumber evidence="1">1.5.1.5</ecNumber>
        </recommendedName>
    </domain>
    <domain>
        <recommendedName>
            <fullName evidence="1">Methenyltetrahydrofolate cyclohydrolase</fullName>
            <ecNumber evidence="1">3.5.4.9</ecNumber>
        </recommendedName>
    </domain>
</protein>
<organism>
    <name type="scientific">Mesoplasma florum (strain ATCC 33453 / NBRC 100688 / NCTC 11704 / L1)</name>
    <name type="common">Acholeplasma florum</name>
    <dbReference type="NCBI Taxonomy" id="265311"/>
    <lineage>
        <taxon>Bacteria</taxon>
        <taxon>Bacillati</taxon>
        <taxon>Mycoplasmatota</taxon>
        <taxon>Mollicutes</taxon>
        <taxon>Entomoplasmatales</taxon>
        <taxon>Entomoplasmataceae</taxon>
        <taxon>Mesoplasma</taxon>
    </lineage>
</organism>
<accession>Q6F1V0</accession>
<reference key="1">
    <citation type="submission" date="2004-06" db="EMBL/GenBank/DDBJ databases">
        <authorList>
            <person name="Birren B.W."/>
            <person name="Stange-Thomann N."/>
            <person name="Hafez N."/>
            <person name="DeCaprio D."/>
            <person name="Fisher S."/>
            <person name="Butler J."/>
            <person name="Elkins T."/>
            <person name="Kodira C.D."/>
            <person name="Major J."/>
            <person name="Wang S."/>
            <person name="Nicol R."/>
            <person name="Nusbaum C."/>
        </authorList>
    </citation>
    <scope>NUCLEOTIDE SEQUENCE [LARGE SCALE GENOMIC DNA]</scope>
    <source>
        <strain>ATCC 33453 / NBRC 100688 / NCTC 11704 / L1</strain>
    </source>
</reference>